<dbReference type="EC" id="5.2.1.8" evidence="1"/>
<dbReference type="EMBL" id="CP000013">
    <property type="protein sequence ID" value="AAU07458.1"/>
    <property type="molecule type" value="Genomic_DNA"/>
</dbReference>
<dbReference type="RefSeq" id="WP_011193916.1">
    <property type="nucleotide sequence ID" value="NZ_CP028872.1"/>
</dbReference>
<dbReference type="SMR" id="Q660R3"/>
<dbReference type="GeneID" id="45161406"/>
<dbReference type="KEGG" id="bga:BG0626"/>
<dbReference type="eggNOG" id="COG0544">
    <property type="taxonomic scope" value="Bacteria"/>
</dbReference>
<dbReference type="HOGENOM" id="CLU_033058_3_1_12"/>
<dbReference type="OrthoDB" id="9767721at2"/>
<dbReference type="Proteomes" id="UP000002276">
    <property type="component" value="Chromosome"/>
</dbReference>
<dbReference type="GO" id="GO:0005737">
    <property type="term" value="C:cytoplasm"/>
    <property type="evidence" value="ECO:0007669"/>
    <property type="project" value="UniProtKB-SubCell"/>
</dbReference>
<dbReference type="GO" id="GO:0003755">
    <property type="term" value="F:peptidyl-prolyl cis-trans isomerase activity"/>
    <property type="evidence" value="ECO:0007669"/>
    <property type="project" value="UniProtKB-UniRule"/>
</dbReference>
<dbReference type="GO" id="GO:0044183">
    <property type="term" value="F:protein folding chaperone"/>
    <property type="evidence" value="ECO:0007669"/>
    <property type="project" value="TreeGrafter"/>
</dbReference>
<dbReference type="GO" id="GO:0043022">
    <property type="term" value="F:ribosome binding"/>
    <property type="evidence" value="ECO:0007669"/>
    <property type="project" value="TreeGrafter"/>
</dbReference>
<dbReference type="GO" id="GO:0051083">
    <property type="term" value="P:'de novo' cotranslational protein folding"/>
    <property type="evidence" value="ECO:0007669"/>
    <property type="project" value="TreeGrafter"/>
</dbReference>
<dbReference type="GO" id="GO:0051301">
    <property type="term" value="P:cell division"/>
    <property type="evidence" value="ECO:0007669"/>
    <property type="project" value="UniProtKB-KW"/>
</dbReference>
<dbReference type="GO" id="GO:0061077">
    <property type="term" value="P:chaperone-mediated protein folding"/>
    <property type="evidence" value="ECO:0007669"/>
    <property type="project" value="TreeGrafter"/>
</dbReference>
<dbReference type="GO" id="GO:0015031">
    <property type="term" value="P:protein transport"/>
    <property type="evidence" value="ECO:0007669"/>
    <property type="project" value="UniProtKB-UniRule"/>
</dbReference>
<dbReference type="GO" id="GO:0043335">
    <property type="term" value="P:protein unfolding"/>
    <property type="evidence" value="ECO:0007669"/>
    <property type="project" value="TreeGrafter"/>
</dbReference>
<dbReference type="Gene3D" id="3.10.50.40">
    <property type="match status" value="1"/>
</dbReference>
<dbReference type="Gene3D" id="3.30.70.1050">
    <property type="entry name" value="Trigger factor ribosome-binding domain"/>
    <property type="match status" value="1"/>
</dbReference>
<dbReference type="Gene3D" id="1.10.3120.10">
    <property type="entry name" value="Trigger factor, C-terminal domain"/>
    <property type="match status" value="1"/>
</dbReference>
<dbReference type="HAMAP" id="MF_00303">
    <property type="entry name" value="Trigger_factor_Tig"/>
    <property type="match status" value="1"/>
</dbReference>
<dbReference type="InterPro" id="IPR046357">
    <property type="entry name" value="PPIase_dom_sf"/>
</dbReference>
<dbReference type="InterPro" id="IPR005215">
    <property type="entry name" value="Trig_fac"/>
</dbReference>
<dbReference type="InterPro" id="IPR008880">
    <property type="entry name" value="Trigger_fac_C"/>
</dbReference>
<dbReference type="InterPro" id="IPR037041">
    <property type="entry name" value="Trigger_fac_C_sf"/>
</dbReference>
<dbReference type="InterPro" id="IPR008881">
    <property type="entry name" value="Trigger_fac_ribosome-bd_bac"/>
</dbReference>
<dbReference type="InterPro" id="IPR036611">
    <property type="entry name" value="Trigger_fac_ribosome-bd_sf"/>
</dbReference>
<dbReference type="InterPro" id="IPR027304">
    <property type="entry name" value="Trigger_fact/SurA_dom_sf"/>
</dbReference>
<dbReference type="NCBIfam" id="TIGR00115">
    <property type="entry name" value="tig"/>
    <property type="match status" value="1"/>
</dbReference>
<dbReference type="PANTHER" id="PTHR30560">
    <property type="entry name" value="TRIGGER FACTOR CHAPERONE AND PEPTIDYL-PROLYL CIS/TRANS ISOMERASE"/>
    <property type="match status" value="1"/>
</dbReference>
<dbReference type="PANTHER" id="PTHR30560:SF3">
    <property type="entry name" value="TRIGGER FACTOR-LIKE PROTEIN TIG, CHLOROPLASTIC"/>
    <property type="match status" value="1"/>
</dbReference>
<dbReference type="Pfam" id="PF05698">
    <property type="entry name" value="Trigger_C"/>
    <property type="match status" value="1"/>
</dbReference>
<dbReference type="Pfam" id="PF05697">
    <property type="entry name" value="Trigger_N"/>
    <property type="match status" value="1"/>
</dbReference>
<dbReference type="PIRSF" id="PIRSF003095">
    <property type="entry name" value="Trigger_factor"/>
    <property type="match status" value="1"/>
</dbReference>
<dbReference type="SUPFAM" id="SSF54534">
    <property type="entry name" value="FKBP-like"/>
    <property type="match status" value="1"/>
</dbReference>
<dbReference type="SUPFAM" id="SSF109998">
    <property type="entry name" value="Triger factor/SurA peptide-binding domain-like"/>
    <property type="match status" value="1"/>
</dbReference>
<dbReference type="SUPFAM" id="SSF102735">
    <property type="entry name" value="Trigger factor ribosome-binding domain"/>
    <property type="match status" value="1"/>
</dbReference>
<protein>
    <recommendedName>
        <fullName evidence="1">Trigger factor</fullName>
        <shortName evidence="1">TF</shortName>
        <ecNumber evidence="1">5.2.1.8</ecNumber>
    </recommendedName>
    <alternativeName>
        <fullName evidence="1">PPIase</fullName>
    </alternativeName>
</protein>
<accession>Q660R3</accession>
<name>TIG_BORGP</name>
<evidence type="ECO:0000255" key="1">
    <source>
        <dbReference type="HAMAP-Rule" id="MF_00303"/>
    </source>
</evidence>
<comment type="function">
    <text evidence="1">Involved in protein export. Acts as a chaperone by maintaining the newly synthesized protein in an open conformation. Functions as a peptidyl-prolyl cis-trans isomerase.</text>
</comment>
<comment type="catalytic activity">
    <reaction evidence="1">
        <text>[protein]-peptidylproline (omega=180) = [protein]-peptidylproline (omega=0)</text>
        <dbReference type="Rhea" id="RHEA:16237"/>
        <dbReference type="Rhea" id="RHEA-COMP:10747"/>
        <dbReference type="Rhea" id="RHEA-COMP:10748"/>
        <dbReference type="ChEBI" id="CHEBI:83833"/>
        <dbReference type="ChEBI" id="CHEBI:83834"/>
        <dbReference type="EC" id="5.2.1.8"/>
    </reaction>
</comment>
<comment type="subcellular location">
    <subcellularLocation>
        <location>Cytoplasm</location>
    </subcellularLocation>
    <text evidence="1">About half TF is bound to the ribosome near the polypeptide exit tunnel while the other half is free in the cytoplasm.</text>
</comment>
<comment type="domain">
    <text evidence="1">Consists of 3 domains; the N-terminus binds the ribosome, the middle domain has PPIase activity, while the C-terminus has intrinsic chaperone activity on its own.</text>
</comment>
<comment type="similarity">
    <text evidence="1">Belongs to the FKBP-type PPIase family. Tig subfamily.</text>
</comment>
<organism>
    <name type="scientific">Borrelia garinii subsp. bavariensis (strain ATCC BAA-2496 / DSM 23469 / PBi)</name>
    <name type="common">Borreliella bavariensis</name>
    <dbReference type="NCBI Taxonomy" id="290434"/>
    <lineage>
        <taxon>Bacteria</taxon>
        <taxon>Pseudomonadati</taxon>
        <taxon>Spirochaetota</taxon>
        <taxon>Spirochaetia</taxon>
        <taxon>Spirochaetales</taxon>
        <taxon>Borreliaceae</taxon>
        <taxon>Borreliella</taxon>
    </lineage>
</organism>
<sequence length="452" mass="52646">MILSKDIKLLPGSKVEVLIRVSKNIIQEKYKSLLQDYSSRLKIQGFRIGKVPINIIENKYSEGLKATVLEEVINGSFKEFFKEEPKRPLSYAAPTIKEKDLRLDLDKDFEFTFTYETYPEFEIPSVDSIDIKVEVPEVFIDDSDIDNEIRRLQIENSIIIEDEEGVVKKNSIVKVDFVELDDLLNEILSTKRQDFVFTVGKSETYYDFDRDVIGMRINEEKVLEKSYITDYKFEELAGSSRKLKIKIKSIKKRDLPLIDDEFAQDISDRYDTLDDLKNFIRSDILNVIEEKKEALKLNKFFSTISEKLEIDIPHSMIEAEIEIAFKDTAKQNKMGLEEFKSIFYSSGYVGSVNLKDKILSNLKSKLIIQKMVDLDPIEVTESDLEDEIARQSENSGMSCEEIKKFYEDQNLISYLKDDIKRKRVKKKILANLKELKGKQVSFKDFVNYKICE</sequence>
<feature type="chain" id="PRO_0000179320" description="Trigger factor">
    <location>
        <begin position="1"/>
        <end position="452"/>
    </location>
</feature>
<feature type="domain" description="PPIase FKBP-type" evidence="1">
    <location>
        <begin position="170"/>
        <end position="256"/>
    </location>
</feature>
<gene>
    <name evidence="1" type="primary">tig</name>
    <name type="ordered locus">BG0626</name>
</gene>
<proteinExistence type="inferred from homology"/>
<keyword id="KW-0131">Cell cycle</keyword>
<keyword id="KW-0132">Cell division</keyword>
<keyword id="KW-0143">Chaperone</keyword>
<keyword id="KW-0963">Cytoplasm</keyword>
<keyword id="KW-0413">Isomerase</keyword>
<keyword id="KW-0697">Rotamase</keyword>
<reference key="1">
    <citation type="journal article" date="2004" name="Nucleic Acids Res.">
        <title>Comparative analysis of the Borrelia garinii genome.</title>
        <authorList>
            <person name="Gloeckner G."/>
            <person name="Lehmann R."/>
            <person name="Romualdi A."/>
            <person name="Pradella S."/>
            <person name="Schulte-Spechtel U."/>
            <person name="Schilhabel M."/>
            <person name="Wilske B."/>
            <person name="Suehnel J."/>
            <person name="Platzer M."/>
        </authorList>
    </citation>
    <scope>NUCLEOTIDE SEQUENCE [LARGE SCALE GENOMIC DNA]</scope>
    <source>
        <strain>ATCC BAA-2496 / DSM 23469 / PBi</strain>
    </source>
</reference>